<name>GLYA_NEIG2</name>
<reference key="1">
    <citation type="journal article" date="2008" name="J. Bacteriol.">
        <title>Complete genome sequence of Neisseria gonorrhoeae NCCP11945.</title>
        <authorList>
            <person name="Chung G.T."/>
            <person name="Yoo J.S."/>
            <person name="Oh H.B."/>
            <person name="Lee Y.S."/>
            <person name="Cha S.H."/>
            <person name="Kim S.J."/>
            <person name="Yoo C.K."/>
        </authorList>
    </citation>
    <scope>NUCLEOTIDE SEQUENCE [LARGE SCALE GENOMIC DNA]</scope>
    <source>
        <strain>NCCP11945</strain>
    </source>
</reference>
<protein>
    <recommendedName>
        <fullName evidence="1">Serine hydroxymethyltransferase</fullName>
        <shortName evidence="1">SHMT</shortName>
        <shortName evidence="1">Serine methylase</shortName>
        <ecNumber evidence="1">2.1.2.1</ecNumber>
    </recommendedName>
</protein>
<evidence type="ECO:0000255" key="1">
    <source>
        <dbReference type="HAMAP-Rule" id="MF_00051"/>
    </source>
</evidence>
<proteinExistence type="inferred from homology"/>
<sequence>MFSKSVTLAQYDPDLAAAIAQEDRRQQDHVELIASENYVSCAVMEAQGSQLTNKYAEGYPAKRYYGGCEYVDIVEQLAIDRVKELFGAAYANVQPHSGSQANQAVYASVLKPGDTILGMSLAHGGHLTHGASVNISGKLYNAVTYGLDENEVLDYAEVERLALEHKPKMIVAGASAYALQIDWAKFREIADKVGAYLFVDMAHYAGLVAGGEYPNPVPFCDFVTTTTHKTLRGPRGGVILCRDNTHEKALNSSIFPSLQGGPLMHVIAAKAVAFKEALQPEFKQYAKQVKINAAVMAEELVKRGLRIVSGRTESHVFLVDLQPMKITGKAAEAALGKAHITVNKNAIPNDPEKPFVTSGIRIGSAAMTTRGFNETDARVLSNLVADVLANPEDEANLAKVRGQVTALCDKYPVYGN</sequence>
<organism>
    <name type="scientific">Neisseria gonorrhoeae (strain NCCP11945)</name>
    <dbReference type="NCBI Taxonomy" id="521006"/>
    <lineage>
        <taxon>Bacteria</taxon>
        <taxon>Pseudomonadati</taxon>
        <taxon>Pseudomonadota</taxon>
        <taxon>Betaproteobacteria</taxon>
        <taxon>Neisseriales</taxon>
        <taxon>Neisseriaceae</taxon>
        <taxon>Neisseria</taxon>
    </lineage>
</organism>
<feature type="chain" id="PRO_1000091563" description="Serine hydroxymethyltransferase">
    <location>
        <begin position="1"/>
        <end position="416"/>
    </location>
</feature>
<feature type="binding site" evidence="1">
    <location>
        <position position="121"/>
    </location>
    <ligand>
        <name>(6S)-5,6,7,8-tetrahydrofolate</name>
        <dbReference type="ChEBI" id="CHEBI:57453"/>
    </ligand>
</feature>
<feature type="binding site" evidence="1">
    <location>
        <begin position="125"/>
        <end position="127"/>
    </location>
    <ligand>
        <name>(6S)-5,6,7,8-tetrahydrofolate</name>
        <dbReference type="ChEBI" id="CHEBI:57453"/>
    </ligand>
</feature>
<feature type="site" description="Plays an important role in substrate specificity" evidence="1">
    <location>
        <position position="228"/>
    </location>
</feature>
<feature type="modified residue" description="N6-(pyridoxal phosphate)lysine" evidence="1">
    <location>
        <position position="229"/>
    </location>
</feature>
<keyword id="KW-0028">Amino-acid biosynthesis</keyword>
<keyword id="KW-0963">Cytoplasm</keyword>
<keyword id="KW-0554">One-carbon metabolism</keyword>
<keyword id="KW-0663">Pyridoxal phosphate</keyword>
<keyword id="KW-0808">Transferase</keyword>
<gene>
    <name evidence="1" type="primary">glyA</name>
    <name type="ordered locus">NGK_0939</name>
</gene>
<comment type="function">
    <text evidence="1">Catalyzes the reversible interconversion of serine and glycine with tetrahydrofolate (THF) serving as the one-carbon carrier. This reaction serves as the major source of one-carbon groups required for the biosynthesis of purines, thymidylate, methionine, and other important biomolecules. Also exhibits THF-independent aldolase activity toward beta-hydroxyamino acids, producing glycine and aldehydes, via a retro-aldol mechanism.</text>
</comment>
<comment type="catalytic activity">
    <reaction evidence="1">
        <text>(6R)-5,10-methylene-5,6,7,8-tetrahydrofolate + glycine + H2O = (6S)-5,6,7,8-tetrahydrofolate + L-serine</text>
        <dbReference type="Rhea" id="RHEA:15481"/>
        <dbReference type="ChEBI" id="CHEBI:15377"/>
        <dbReference type="ChEBI" id="CHEBI:15636"/>
        <dbReference type="ChEBI" id="CHEBI:33384"/>
        <dbReference type="ChEBI" id="CHEBI:57305"/>
        <dbReference type="ChEBI" id="CHEBI:57453"/>
        <dbReference type="EC" id="2.1.2.1"/>
    </reaction>
</comment>
<comment type="cofactor">
    <cofactor evidence="1">
        <name>pyridoxal 5'-phosphate</name>
        <dbReference type="ChEBI" id="CHEBI:597326"/>
    </cofactor>
</comment>
<comment type="pathway">
    <text evidence="1">One-carbon metabolism; tetrahydrofolate interconversion.</text>
</comment>
<comment type="pathway">
    <text evidence="1">Amino-acid biosynthesis; glycine biosynthesis; glycine from L-serine: step 1/1.</text>
</comment>
<comment type="subunit">
    <text evidence="1">Homodimer.</text>
</comment>
<comment type="subcellular location">
    <subcellularLocation>
        <location evidence="1">Cytoplasm</location>
    </subcellularLocation>
</comment>
<comment type="similarity">
    <text evidence="1">Belongs to the SHMT family.</text>
</comment>
<dbReference type="EC" id="2.1.2.1" evidence="1"/>
<dbReference type="EMBL" id="CP001050">
    <property type="protein sequence ID" value="ACF29616.1"/>
    <property type="molecule type" value="Genomic_DNA"/>
</dbReference>
<dbReference type="RefSeq" id="WP_003691112.1">
    <property type="nucleotide sequence ID" value="NC_011035.1"/>
</dbReference>
<dbReference type="SMR" id="B4RLC9"/>
<dbReference type="GeneID" id="66753200"/>
<dbReference type="KEGG" id="ngk:NGK_0939"/>
<dbReference type="HOGENOM" id="CLU_022477_2_1_4"/>
<dbReference type="UniPathway" id="UPA00193"/>
<dbReference type="UniPathway" id="UPA00288">
    <property type="reaction ID" value="UER01023"/>
</dbReference>
<dbReference type="Proteomes" id="UP000002564">
    <property type="component" value="Chromosome"/>
</dbReference>
<dbReference type="GO" id="GO:0005829">
    <property type="term" value="C:cytosol"/>
    <property type="evidence" value="ECO:0007669"/>
    <property type="project" value="TreeGrafter"/>
</dbReference>
<dbReference type="GO" id="GO:0004372">
    <property type="term" value="F:glycine hydroxymethyltransferase activity"/>
    <property type="evidence" value="ECO:0007669"/>
    <property type="project" value="UniProtKB-UniRule"/>
</dbReference>
<dbReference type="GO" id="GO:0030170">
    <property type="term" value="F:pyridoxal phosphate binding"/>
    <property type="evidence" value="ECO:0007669"/>
    <property type="project" value="UniProtKB-UniRule"/>
</dbReference>
<dbReference type="GO" id="GO:0019264">
    <property type="term" value="P:glycine biosynthetic process from serine"/>
    <property type="evidence" value="ECO:0007669"/>
    <property type="project" value="UniProtKB-UniRule"/>
</dbReference>
<dbReference type="GO" id="GO:0035999">
    <property type="term" value="P:tetrahydrofolate interconversion"/>
    <property type="evidence" value="ECO:0007669"/>
    <property type="project" value="UniProtKB-UniRule"/>
</dbReference>
<dbReference type="CDD" id="cd00378">
    <property type="entry name" value="SHMT"/>
    <property type="match status" value="1"/>
</dbReference>
<dbReference type="FunFam" id="3.40.640.10:FF:000001">
    <property type="entry name" value="Serine hydroxymethyltransferase"/>
    <property type="match status" value="1"/>
</dbReference>
<dbReference type="FunFam" id="3.90.1150.10:FF:000003">
    <property type="entry name" value="Serine hydroxymethyltransferase"/>
    <property type="match status" value="1"/>
</dbReference>
<dbReference type="Gene3D" id="3.90.1150.10">
    <property type="entry name" value="Aspartate Aminotransferase, domain 1"/>
    <property type="match status" value="1"/>
</dbReference>
<dbReference type="Gene3D" id="3.40.640.10">
    <property type="entry name" value="Type I PLP-dependent aspartate aminotransferase-like (Major domain)"/>
    <property type="match status" value="1"/>
</dbReference>
<dbReference type="HAMAP" id="MF_00051">
    <property type="entry name" value="SHMT"/>
    <property type="match status" value="1"/>
</dbReference>
<dbReference type="InterPro" id="IPR015424">
    <property type="entry name" value="PyrdxlP-dep_Trfase"/>
</dbReference>
<dbReference type="InterPro" id="IPR015421">
    <property type="entry name" value="PyrdxlP-dep_Trfase_major"/>
</dbReference>
<dbReference type="InterPro" id="IPR015422">
    <property type="entry name" value="PyrdxlP-dep_Trfase_small"/>
</dbReference>
<dbReference type="InterPro" id="IPR001085">
    <property type="entry name" value="Ser_HO-MeTrfase"/>
</dbReference>
<dbReference type="InterPro" id="IPR049943">
    <property type="entry name" value="Ser_HO-MeTrfase-like"/>
</dbReference>
<dbReference type="InterPro" id="IPR019798">
    <property type="entry name" value="Ser_HO-MeTrfase_PLP_BS"/>
</dbReference>
<dbReference type="InterPro" id="IPR039429">
    <property type="entry name" value="SHMT-like_dom"/>
</dbReference>
<dbReference type="NCBIfam" id="NF000586">
    <property type="entry name" value="PRK00011.1"/>
    <property type="match status" value="1"/>
</dbReference>
<dbReference type="PANTHER" id="PTHR11680">
    <property type="entry name" value="SERINE HYDROXYMETHYLTRANSFERASE"/>
    <property type="match status" value="1"/>
</dbReference>
<dbReference type="PANTHER" id="PTHR11680:SF50">
    <property type="entry name" value="SERINE HYDROXYMETHYLTRANSFERASE"/>
    <property type="match status" value="1"/>
</dbReference>
<dbReference type="Pfam" id="PF00464">
    <property type="entry name" value="SHMT"/>
    <property type="match status" value="1"/>
</dbReference>
<dbReference type="PIRSF" id="PIRSF000412">
    <property type="entry name" value="SHMT"/>
    <property type="match status" value="1"/>
</dbReference>
<dbReference type="SUPFAM" id="SSF53383">
    <property type="entry name" value="PLP-dependent transferases"/>
    <property type="match status" value="1"/>
</dbReference>
<dbReference type="PROSITE" id="PS00096">
    <property type="entry name" value="SHMT"/>
    <property type="match status" value="1"/>
</dbReference>
<accession>B4RLC9</accession>